<reference key="1">
    <citation type="submission" date="1996-04" db="EMBL/GenBank/DDBJ databases">
        <title>Expression characteristics of an epsilon-subunit for the cytosolic chaperonin containing TCP-1 (CCT) from oat in differently growing tissues.</title>
        <authorList>
            <person name="Ehmann B."/>
            <person name="Moser M."/>
            <person name="Schaefer E."/>
        </authorList>
    </citation>
    <scope>NUCLEOTIDE SEQUENCE [MRNA]</scope>
    <source>
        <strain>cv. Pewi</strain>
    </source>
</reference>
<name>TBA_AVESA</name>
<feature type="chain" id="PRO_0000048141" description="Tubulin alpha chain">
    <location>
        <begin position="1"/>
        <end position="447"/>
    </location>
</feature>
<feature type="active site" evidence="1">
    <location>
        <position position="254"/>
    </location>
</feature>
<feature type="binding site" evidence="1">
    <location>
        <position position="11"/>
    </location>
    <ligand>
        <name>GTP</name>
        <dbReference type="ChEBI" id="CHEBI:37565"/>
    </ligand>
</feature>
<feature type="binding site" evidence="1">
    <location>
        <position position="71"/>
    </location>
    <ligand>
        <name>GTP</name>
        <dbReference type="ChEBI" id="CHEBI:37565"/>
    </ligand>
</feature>
<feature type="binding site" evidence="1">
    <location>
        <position position="71"/>
    </location>
    <ligand>
        <name>Mg(2+)</name>
        <dbReference type="ChEBI" id="CHEBI:18420"/>
    </ligand>
</feature>
<feature type="binding site" evidence="1">
    <location>
        <position position="144"/>
    </location>
    <ligand>
        <name>GTP</name>
        <dbReference type="ChEBI" id="CHEBI:37565"/>
    </ligand>
</feature>
<feature type="binding site" evidence="1">
    <location>
        <position position="145"/>
    </location>
    <ligand>
        <name>GTP</name>
        <dbReference type="ChEBI" id="CHEBI:37565"/>
    </ligand>
</feature>
<feature type="binding site" evidence="1">
    <location>
        <position position="179"/>
    </location>
    <ligand>
        <name>GTP</name>
        <dbReference type="ChEBI" id="CHEBI:37565"/>
    </ligand>
</feature>
<feature type="binding site" evidence="1">
    <location>
        <position position="206"/>
    </location>
    <ligand>
        <name>GTP</name>
        <dbReference type="ChEBI" id="CHEBI:37565"/>
    </ligand>
</feature>
<feature type="binding site" evidence="1">
    <location>
        <position position="228"/>
    </location>
    <ligand>
        <name>GTP</name>
        <dbReference type="ChEBI" id="CHEBI:37565"/>
    </ligand>
</feature>
<accession>Q38771</accession>
<comment type="function">
    <text>Tubulin is the major constituent of microtubules, a cylinder consisting of laterally associated linear protofilaments composed of alpha- and beta-tubulin heterodimers. Microtubules grow by the addition of GTP-tubulin dimers to the microtubule end, where a stabilizing cap forms. Below the cap, tubulin dimers are in GDP-bound state, owing to GTPase activity of alpha-tubulin.</text>
</comment>
<comment type="catalytic activity">
    <reaction evidence="1">
        <text>GTP + H2O = GDP + phosphate + H(+)</text>
        <dbReference type="Rhea" id="RHEA:19669"/>
        <dbReference type="ChEBI" id="CHEBI:15377"/>
        <dbReference type="ChEBI" id="CHEBI:15378"/>
        <dbReference type="ChEBI" id="CHEBI:37565"/>
        <dbReference type="ChEBI" id="CHEBI:43474"/>
        <dbReference type="ChEBI" id="CHEBI:58189"/>
    </reaction>
    <physiologicalReaction direction="left-to-right" evidence="1">
        <dbReference type="Rhea" id="RHEA:19670"/>
    </physiologicalReaction>
</comment>
<comment type="cofactor">
    <cofactor evidence="1">
        <name>Mg(2+)</name>
        <dbReference type="ChEBI" id="CHEBI:18420"/>
    </cofactor>
</comment>
<comment type="subunit">
    <text>Dimer of alpha and beta chains. A typical microtubule is a hollow water-filled tube with an outer diameter of 25 nm and an inner diameter of 15 nM. Alpha-beta heterodimers associate head-to-tail to form protofilaments running lengthwise along the microtubule wall with the beta-tubulin subunit facing the microtubule plus end conferring a structural polarity. Microtubules usually have 13 protofilaments but different protofilament numbers can be found in some organisms and specialized cells.</text>
</comment>
<comment type="subcellular location">
    <subcellularLocation>
        <location>Cytoplasm</location>
        <location>Cytoskeleton</location>
    </subcellularLocation>
</comment>
<comment type="similarity">
    <text evidence="2">Belongs to the tubulin family.</text>
</comment>
<protein>
    <recommendedName>
        <fullName>Tubulin alpha chain</fullName>
        <ecNumber evidence="1">3.6.5.-</ecNumber>
    </recommendedName>
</protein>
<keyword id="KW-0963">Cytoplasm</keyword>
<keyword id="KW-0206">Cytoskeleton</keyword>
<keyword id="KW-0342">GTP-binding</keyword>
<keyword id="KW-0378">Hydrolase</keyword>
<keyword id="KW-0460">Magnesium</keyword>
<keyword id="KW-0479">Metal-binding</keyword>
<keyword id="KW-0493">Microtubule</keyword>
<keyword id="KW-0547">Nucleotide-binding</keyword>
<sequence>MREIISIHIGQAGIQVGNACWELYCLEHGIQQDGTMPSDTTVGVAHDAFNTFFSETGAGKHVPRAIFVDLEPTVIDEVRTGAYRQLFHPEQLISGKEDAANNFARGHYTVGKEIVDLCLGRVRQLADNCTGLQGFLVFNAVGGGTGSGLGSLLLERLSVDYGKKSKLGFTIYPSPQVSTAVVEPYNSVLSTHSLLEHTDVAVLLDNEAIYDICRRSLDIERPTYTNLNRLISQIISSLTTSLRFDGAINVDVTEFQTNLVPYPRIHFMLSSYAPVISAEKAYHEQLSVPEITNAVFEPSSMMAKCDPRHGKYMACCLMYRGDVVPKDVNAAVVTIKTKRTVQFVDXCPTGFKCGINYQPPSVVPGGDLAKVQRAVCMISNNTAVAEVFSRIDHKFDLMYAKRAFVHWYVGEGMEEGEFSEAREDLAXLEKXYEEVGAEGADDEVTRG</sequence>
<gene>
    <name type="primary">TUBA</name>
</gene>
<proteinExistence type="evidence at transcript level"/>
<evidence type="ECO:0000250" key="1">
    <source>
        <dbReference type="UniProtKB" id="P68363"/>
    </source>
</evidence>
<evidence type="ECO:0000305" key="2"/>
<organism>
    <name type="scientific">Avena sativa</name>
    <name type="common">Oat</name>
    <dbReference type="NCBI Taxonomy" id="4498"/>
    <lineage>
        <taxon>Eukaryota</taxon>
        <taxon>Viridiplantae</taxon>
        <taxon>Streptophyta</taxon>
        <taxon>Embryophyta</taxon>
        <taxon>Tracheophyta</taxon>
        <taxon>Spermatophyta</taxon>
        <taxon>Magnoliopsida</taxon>
        <taxon>Liliopsida</taxon>
        <taxon>Poales</taxon>
        <taxon>Poaceae</taxon>
        <taxon>BOP clade</taxon>
        <taxon>Pooideae</taxon>
        <taxon>Poodae</taxon>
        <taxon>Poeae</taxon>
        <taxon>Poeae Chloroplast Group 1 (Aveneae type)</taxon>
        <taxon>Aveninae</taxon>
        <taxon>Avena</taxon>
    </lineage>
</organism>
<dbReference type="EC" id="3.6.5.-" evidence="1"/>
<dbReference type="EMBL" id="X97446">
    <property type="protein sequence ID" value="CAA66075.1"/>
    <property type="molecule type" value="mRNA"/>
</dbReference>
<dbReference type="GO" id="GO:0005737">
    <property type="term" value="C:cytoplasm"/>
    <property type="evidence" value="ECO:0007669"/>
    <property type="project" value="UniProtKB-KW"/>
</dbReference>
<dbReference type="GO" id="GO:0005874">
    <property type="term" value="C:microtubule"/>
    <property type="evidence" value="ECO:0007669"/>
    <property type="project" value="UniProtKB-KW"/>
</dbReference>
<dbReference type="GO" id="GO:0005525">
    <property type="term" value="F:GTP binding"/>
    <property type="evidence" value="ECO:0007669"/>
    <property type="project" value="UniProtKB-KW"/>
</dbReference>
<dbReference type="GO" id="GO:0016787">
    <property type="term" value="F:hydrolase activity"/>
    <property type="evidence" value="ECO:0007669"/>
    <property type="project" value="UniProtKB-KW"/>
</dbReference>
<dbReference type="GO" id="GO:0046872">
    <property type="term" value="F:metal ion binding"/>
    <property type="evidence" value="ECO:0007669"/>
    <property type="project" value="UniProtKB-KW"/>
</dbReference>
<dbReference type="GO" id="GO:0005200">
    <property type="term" value="F:structural constituent of cytoskeleton"/>
    <property type="evidence" value="ECO:0007669"/>
    <property type="project" value="InterPro"/>
</dbReference>
<dbReference type="GO" id="GO:0007017">
    <property type="term" value="P:microtubule-based process"/>
    <property type="evidence" value="ECO:0007669"/>
    <property type="project" value="InterPro"/>
</dbReference>
<dbReference type="CDD" id="cd02186">
    <property type="entry name" value="alpha_tubulin"/>
    <property type="match status" value="1"/>
</dbReference>
<dbReference type="FunFam" id="1.10.287.600:FF:000001">
    <property type="entry name" value="Tubulin alpha chain"/>
    <property type="match status" value="1"/>
</dbReference>
<dbReference type="FunFam" id="3.30.1330.20:FF:000001">
    <property type="entry name" value="Tubulin alpha chain"/>
    <property type="match status" value="1"/>
</dbReference>
<dbReference type="FunFam" id="3.40.50.1440:FF:000004">
    <property type="entry name" value="Tubulin alpha chain"/>
    <property type="match status" value="1"/>
</dbReference>
<dbReference type="Gene3D" id="1.10.287.600">
    <property type="entry name" value="Helix hairpin bin"/>
    <property type="match status" value="1"/>
</dbReference>
<dbReference type="Gene3D" id="3.30.1330.20">
    <property type="entry name" value="Tubulin/FtsZ, C-terminal domain"/>
    <property type="match status" value="1"/>
</dbReference>
<dbReference type="Gene3D" id="3.40.50.1440">
    <property type="entry name" value="Tubulin/FtsZ, GTPase domain"/>
    <property type="match status" value="1"/>
</dbReference>
<dbReference type="InterPro" id="IPR002452">
    <property type="entry name" value="Alpha_tubulin"/>
</dbReference>
<dbReference type="InterPro" id="IPR013838">
    <property type="entry name" value="Beta-tubulin_BS"/>
</dbReference>
<dbReference type="InterPro" id="IPR008280">
    <property type="entry name" value="Tub_FtsZ_C"/>
</dbReference>
<dbReference type="InterPro" id="IPR000217">
    <property type="entry name" value="Tubulin"/>
</dbReference>
<dbReference type="InterPro" id="IPR037103">
    <property type="entry name" value="Tubulin/FtsZ-like_C"/>
</dbReference>
<dbReference type="InterPro" id="IPR018316">
    <property type="entry name" value="Tubulin/FtsZ_2-layer-sand-dom"/>
</dbReference>
<dbReference type="InterPro" id="IPR036525">
    <property type="entry name" value="Tubulin/FtsZ_GTPase_sf"/>
</dbReference>
<dbReference type="InterPro" id="IPR023123">
    <property type="entry name" value="Tubulin_C"/>
</dbReference>
<dbReference type="InterPro" id="IPR017975">
    <property type="entry name" value="Tubulin_CS"/>
</dbReference>
<dbReference type="InterPro" id="IPR003008">
    <property type="entry name" value="Tubulin_FtsZ_GTPase"/>
</dbReference>
<dbReference type="PANTHER" id="PTHR11588">
    <property type="entry name" value="TUBULIN"/>
    <property type="match status" value="1"/>
</dbReference>
<dbReference type="Pfam" id="PF00091">
    <property type="entry name" value="Tubulin"/>
    <property type="match status" value="1"/>
</dbReference>
<dbReference type="Pfam" id="PF03953">
    <property type="entry name" value="Tubulin_C"/>
    <property type="match status" value="1"/>
</dbReference>
<dbReference type="PRINTS" id="PR01162">
    <property type="entry name" value="ALPHATUBULIN"/>
</dbReference>
<dbReference type="PRINTS" id="PR01161">
    <property type="entry name" value="TUBULIN"/>
</dbReference>
<dbReference type="SMART" id="SM00864">
    <property type="entry name" value="Tubulin"/>
    <property type="match status" value="1"/>
</dbReference>
<dbReference type="SMART" id="SM00865">
    <property type="entry name" value="Tubulin_C"/>
    <property type="match status" value="1"/>
</dbReference>
<dbReference type="SUPFAM" id="SSF55307">
    <property type="entry name" value="Tubulin C-terminal domain-like"/>
    <property type="match status" value="1"/>
</dbReference>
<dbReference type="SUPFAM" id="SSF52490">
    <property type="entry name" value="Tubulin nucleotide-binding domain-like"/>
    <property type="match status" value="1"/>
</dbReference>
<dbReference type="PROSITE" id="PS00227">
    <property type="entry name" value="TUBULIN"/>
    <property type="match status" value="1"/>
</dbReference>